<feature type="chain" id="PRO_0000213976" description="Golgin subfamily A member 7">
    <location>
        <begin position="1"/>
        <end position="137"/>
    </location>
</feature>
<feature type="lipid moiety-binding region" description="S-palmitoyl cysteine" evidence="1">
    <location>
        <position position="69"/>
    </location>
</feature>
<feature type="lipid moiety-binding region" description="S-palmitoyl cysteine" evidence="1">
    <location>
        <position position="72"/>
    </location>
</feature>
<comment type="function">
    <text evidence="1">May be involved in protein transport from Golgi to cell surface. The ZDHHC9-GOLGA7 complex is a palmitoyltransferase specific for HRAS and NRAS (By similarity).</text>
</comment>
<comment type="subunit">
    <text evidence="1">Interacts with GOLGA3. Interacts with ZDHHC9 (By similarity).</text>
</comment>
<comment type="subcellular location">
    <subcellularLocation>
        <location evidence="1">Golgi apparatus membrane</location>
        <topology evidence="1">Lipid-anchor</topology>
    </subcellularLocation>
</comment>
<comment type="PTM">
    <text evidence="1">Palmitoylated on Cys-69 and Cys-72; which is required for Golgi localization and interaction with GOLGA3.</text>
</comment>
<comment type="similarity">
    <text evidence="2">Belongs to the ERF4 family.</text>
</comment>
<sequence length="137" mass="15824">MRPQQAPVSGKVFIQRDYSSGTRCQFQTKFPAELENRIDRQQFEETVRTLNNLYAEAEKLGGQSYLEGCLACLTAYTIFLCMETHYEKVLKKVSKYIQEQNEKIYAPQGLLLTDPIERGLRVIEITIYEDRGMSSGR</sequence>
<keyword id="KW-0333">Golgi apparatus</keyword>
<keyword id="KW-0449">Lipoprotein</keyword>
<keyword id="KW-0472">Membrane</keyword>
<keyword id="KW-0564">Palmitate</keyword>
<keyword id="KW-1185">Reference proteome</keyword>
<accession>Q5EA55</accession>
<accession>Q0VCT8</accession>
<protein>
    <recommendedName>
        <fullName>Golgin subfamily A member 7</fullName>
    </recommendedName>
</protein>
<dbReference type="EMBL" id="BT020714">
    <property type="protein sequence ID" value="AAX08731.1"/>
    <property type="molecule type" value="mRNA"/>
</dbReference>
<dbReference type="EMBL" id="BC120011">
    <property type="protein sequence ID" value="AAI20012.1"/>
    <property type="molecule type" value="mRNA"/>
</dbReference>
<dbReference type="RefSeq" id="NP_001030561.1">
    <property type="nucleotide sequence ID" value="NM_001035484.1"/>
</dbReference>
<dbReference type="RefSeq" id="XP_005226188.1">
    <property type="nucleotide sequence ID" value="XM_005226131.4"/>
</dbReference>
<dbReference type="RefSeq" id="XP_005226189.1">
    <property type="nucleotide sequence ID" value="XM_005226132.5"/>
</dbReference>
<dbReference type="SMR" id="Q5EA55"/>
<dbReference type="FunCoup" id="Q5EA55">
    <property type="interactions" value="4097"/>
</dbReference>
<dbReference type="STRING" id="9913.ENSBTAP00000039576"/>
<dbReference type="PaxDb" id="9913-ENSBTAP00000039576"/>
<dbReference type="Ensembl" id="ENSBTAT00000039788.5">
    <property type="protein sequence ID" value="ENSBTAP00000039576.3"/>
    <property type="gene ID" value="ENSBTAG00000027626.5"/>
</dbReference>
<dbReference type="GeneID" id="616809"/>
<dbReference type="KEGG" id="bta:616809"/>
<dbReference type="CTD" id="51125"/>
<dbReference type="VEuPathDB" id="HostDB:ENSBTAG00000027626"/>
<dbReference type="VGNC" id="VGNC:29487">
    <property type="gene designation" value="GOLGA7"/>
</dbReference>
<dbReference type="eggNOG" id="KOG4069">
    <property type="taxonomic scope" value="Eukaryota"/>
</dbReference>
<dbReference type="GeneTree" id="ENSGT00390000000134"/>
<dbReference type="HOGENOM" id="CLU_130071_0_1_1"/>
<dbReference type="InParanoid" id="Q5EA55"/>
<dbReference type="OMA" id="CEMRPQQ"/>
<dbReference type="OrthoDB" id="2190159at2759"/>
<dbReference type="TreeFam" id="TF313115"/>
<dbReference type="Reactome" id="R-BTA-6798695">
    <property type="pathway name" value="Neutrophil degranulation"/>
</dbReference>
<dbReference type="Reactome" id="R-BTA-9648002">
    <property type="pathway name" value="RAS processing"/>
</dbReference>
<dbReference type="Proteomes" id="UP000009136">
    <property type="component" value="Chromosome 27"/>
</dbReference>
<dbReference type="Bgee" id="ENSBTAG00000027626">
    <property type="expression patterns" value="Expressed in midbrain and 104 other cell types or tissues"/>
</dbReference>
<dbReference type="GO" id="GO:0000139">
    <property type="term" value="C:Golgi membrane"/>
    <property type="evidence" value="ECO:0000250"/>
    <property type="project" value="CAFA"/>
</dbReference>
<dbReference type="GO" id="GO:0005795">
    <property type="term" value="C:Golgi stack"/>
    <property type="evidence" value="ECO:0000250"/>
    <property type="project" value="CAFA"/>
</dbReference>
<dbReference type="GO" id="GO:0002178">
    <property type="term" value="C:palmitoyltransferase complex"/>
    <property type="evidence" value="ECO:0000250"/>
    <property type="project" value="CAFA"/>
</dbReference>
<dbReference type="GO" id="GO:0043001">
    <property type="term" value="P:Golgi to plasma membrane protein transport"/>
    <property type="evidence" value="ECO:0000250"/>
    <property type="project" value="CAFA"/>
</dbReference>
<dbReference type="GO" id="GO:0018230">
    <property type="term" value="P:peptidyl-L-cysteine S-palmitoylation"/>
    <property type="evidence" value="ECO:0000250"/>
    <property type="project" value="CAFA"/>
</dbReference>
<dbReference type="GO" id="GO:0050821">
    <property type="term" value="P:protein stabilization"/>
    <property type="evidence" value="ECO:0000250"/>
    <property type="project" value="CAFA"/>
</dbReference>
<dbReference type="GO" id="GO:0006612">
    <property type="term" value="P:protein targeting to membrane"/>
    <property type="evidence" value="ECO:0000318"/>
    <property type="project" value="GO_Central"/>
</dbReference>
<dbReference type="InterPro" id="IPR019383">
    <property type="entry name" value="Golgin_A_7/ERF4"/>
</dbReference>
<dbReference type="InterPro" id="IPR051371">
    <property type="entry name" value="Ras_palmitoyltransferase"/>
</dbReference>
<dbReference type="PANTHER" id="PTHR13254">
    <property type="entry name" value="GOLGI AUTOANTIGEN, GOLGIN SUBFAMILY A, 7"/>
    <property type="match status" value="1"/>
</dbReference>
<dbReference type="PANTHER" id="PTHR13254:SF1">
    <property type="entry name" value="GOLGIN SUBFAMILY A MEMBER 7"/>
    <property type="match status" value="1"/>
</dbReference>
<dbReference type="Pfam" id="PF10256">
    <property type="entry name" value="Erf4"/>
    <property type="match status" value="1"/>
</dbReference>
<proteinExistence type="evidence at transcript level"/>
<gene>
    <name type="primary">GOLGA7</name>
</gene>
<evidence type="ECO:0000250" key="1"/>
<evidence type="ECO:0000305" key="2"/>
<name>GOGA7_BOVIN</name>
<reference key="1">
    <citation type="journal article" date="2005" name="BMC Genomics">
        <title>Characterization of 954 bovine full-CDS cDNA sequences.</title>
        <authorList>
            <person name="Harhay G.P."/>
            <person name="Sonstegard T.S."/>
            <person name="Keele J.W."/>
            <person name="Heaton M.P."/>
            <person name="Clawson M.L."/>
            <person name="Snelling W.M."/>
            <person name="Wiedmann R.T."/>
            <person name="Van Tassell C.P."/>
            <person name="Smith T.P.L."/>
        </authorList>
    </citation>
    <scope>NUCLEOTIDE SEQUENCE [LARGE SCALE MRNA]</scope>
</reference>
<reference key="2">
    <citation type="submission" date="2006-08" db="EMBL/GenBank/DDBJ databases">
        <authorList>
            <consortium name="NIH - Mammalian Gene Collection (MGC) project"/>
        </authorList>
    </citation>
    <scope>NUCLEOTIDE SEQUENCE [LARGE SCALE MRNA]</scope>
    <source>
        <strain>Hereford</strain>
        <tissue>Fetal pons</tissue>
    </source>
</reference>
<organism>
    <name type="scientific">Bos taurus</name>
    <name type="common">Bovine</name>
    <dbReference type="NCBI Taxonomy" id="9913"/>
    <lineage>
        <taxon>Eukaryota</taxon>
        <taxon>Metazoa</taxon>
        <taxon>Chordata</taxon>
        <taxon>Craniata</taxon>
        <taxon>Vertebrata</taxon>
        <taxon>Euteleostomi</taxon>
        <taxon>Mammalia</taxon>
        <taxon>Eutheria</taxon>
        <taxon>Laurasiatheria</taxon>
        <taxon>Artiodactyla</taxon>
        <taxon>Ruminantia</taxon>
        <taxon>Pecora</taxon>
        <taxon>Bovidae</taxon>
        <taxon>Bovinae</taxon>
        <taxon>Bos</taxon>
    </lineage>
</organism>